<organismHost>
    <name type="scientific">Microplitis demolitor</name>
    <name type="common">Parasitoid wasp</name>
    <dbReference type="NCBI Taxonomy" id="69319"/>
</organismHost>
<dbReference type="EMBL" id="AY875689">
    <property type="protein sequence ID" value="AAW51802.1"/>
    <property type="molecule type" value="Genomic_DNA"/>
</dbReference>
<dbReference type="RefSeq" id="YP_239398.1">
    <property type="nucleotide sequence ID" value="NC_007039.1"/>
</dbReference>
<dbReference type="SMR" id="Q5I130"/>
<dbReference type="KEGG" id="vg:5075839"/>
<dbReference type="Proteomes" id="UP000008168">
    <property type="component" value="Genome"/>
</dbReference>
<dbReference type="GO" id="GO:0033644">
    <property type="term" value="C:host cell membrane"/>
    <property type="evidence" value="ECO:0007669"/>
    <property type="project" value="UniProtKB-SubCell"/>
</dbReference>
<dbReference type="GO" id="GO:0016020">
    <property type="term" value="C:membrane"/>
    <property type="evidence" value="ECO:0007669"/>
    <property type="project" value="UniProtKB-KW"/>
</dbReference>
<evidence type="ECO:0000255" key="1"/>
<evidence type="ECO:0000305" key="2"/>
<gene>
    <name type="primary">N1</name>
</gene>
<sequence length="102" mass="12003">MFQPIYRSNLVIVITLFVSLSYYHTCFVRKRAHIIVQILLCQLFILSCNRSITLLTAWRYLHVMSLILQRCGIIVLKIKLLFGSDVKIFMLLNYGVIKFFSK</sequence>
<keyword id="KW-1043">Host membrane</keyword>
<keyword id="KW-0472">Membrane</keyword>
<keyword id="KW-1185">Reference proteome</keyword>
<keyword id="KW-0812">Transmembrane</keyword>
<keyword id="KW-1133">Transmembrane helix</keyword>
<protein>
    <recommendedName>
        <fullName>Uncharacterized protein N1</fullName>
    </recommendedName>
</protein>
<organism>
    <name type="scientific">Microplitis demolitor bracovirus (isolate Webb)</name>
    <name type="common">MdBV</name>
    <dbReference type="NCBI Taxonomy" id="654919"/>
    <lineage>
        <taxon>Viruses</taxon>
        <taxon>Viruses incertae sedis</taxon>
        <taxon>Polydnaviriformidae</taxon>
        <taxon>Bracoviriform</taxon>
        <taxon>Microplitis demolitor bracovirus</taxon>
    </lineage>
</organism>
<proteinExistence type="predicted"/>
<accession>Q5I130</accession>
<reference key="1">
    <citation type="journal article" date="2006" name="Virology">
        <title>Polydnavirus genomes reflect their dual roles as mutualists and pathogens.</title>
        <authorList>
            <person name="Webb B.A."/>
            <person name="Strand M.R."/>
            <person name="Dickey S.E."/>
            <person name="Beck M.H."/>
            <person name="Hilgarth R.S."/>
            <person name="Barney W.E."/>
            <person name="Kadash K."/>
            <person name="Kroemer J.A."/>
            <person name="Lindstrom K.G."/>
            <person name="Rattanadechakul W."/>
            <person name="Shelby K.S."/>
            <person name="Thoetkiattikul H."/>
            <person name="Turnbull M.W."/>
            <person name="Witherell R.A."/>
        </authorList>
    </citation>
    <scope>NUCLEOTIDE SEQUENCE [GENOMIC DNA]</scope>
</reference>
<name>YN1_MDBVW</name>
<feature type="chain" id="PRO_0000405403" description="Uncharacterized protein N1">
    <location>
        <begin position="1"/>
        <end position="102"/>
    </location>
</feature>
<feature type="transmembrane region" description="Helical" evidence="1">
    <location>
        <begin position="5"/>
        <end position="27"/>
    </location>
</feature>
<comment type="subcellular location">
    <subcellularLocation>
        <location evidence="2">Host membrane</location>
        <topology evidence="2">Single-pass membrane protein</topology>
    </subcellularLocation>
</comment>